<name>RRF_SHEON</name>
<dbReference type="EMBL" id="AE014299">
    <property type="protein sequence ID" value="AAN54687.1"/>
    <property type="molecule type" value="Genomic_DNA"/>
</dbReference>
<dbReference type="RefSeq" id="NP_717243.1">
    <property type="nucleotide sequence ID" value="NC_004347.2"/>
</dbReference>
<dbReference type="RefSeq" id="WP_011071787.1">
    <property type="nucleotide sequence ID" value="NZ_CP053946.1"/>
</dbReference>
<dbReference type="SMR" id="Q8EGH2"/>
<dbReference type="STRING" id="211586.SO_1632"/>
<dbReference type="PaxDb" id="211586-SO_1632"/>
<dbReference type="KEGG" id="son:SO_1632"/>
<dbReference type="PATRIC" id="fig|211586.12.peg.1571"/>
<dbReference type="eggNOG" id="COG0233">
    <property type="taxonomic scope" value="Bacteria"/>
</dbReference>
<dbReference type="HOGENOM" id="CLU_073981_2_1_6"/>
<dbReference type="OrthoDB" id="9804006at2"/>
<dbReference type="PhylomeDB" id="Q8EGH2"/>
<dbReference type="BioCyc" id="SONE211586:G1GMP-1502-MONOMER"/>
<dbReference type="Proteomes" id="UP000008186">
    <property type="component" value="Chromosome"/>
</dbReference>
<dbReference type="GO" id="GO:0005737">
    <property type="term" value="C:cytoplasm"/>
    <property type="evidence" value="ECO:0000318"/>
    <property type="project" value="GO_Central"/>
</dbReference>
<dbReference type="GO" id="GO:0005829">
    <property type="term" value="C:cytosol"/>
    <property type="evidence" value="ECO:0007669"/>
    <property type="project" value="GOC"/>
</dbReference>
<dbReference type="GO" id="GO:0043023">
    <property type="term" value="F:ribosomal large subunit binding"/>
    <property type="evidence" value="ECO:0000318"/>
    <property type="project" value="GO_Central"/>
</dbReference>
<dbReference type="GO" id="GO:0002184">
    <property type="term" value="P:cytoplasmic translational termination"/>
    <property type="evidence" value="ECO:0000318"/>
    <property type="project" value="GO_Central"/>
</dbReference>
<dbReference type="GO" id="GO:0006412">
    <property type="term" value="P:translation"/>
    <property type="evidence" value="ECO:0000318"/>
    <property type="project" value="GO_Central"/>
</dbReference>
<dbReference type="CDD" id="cd00520">
    <property type="entry name" value="RRF"/>
    <property type="match status" value="1"/>
</dbReference>
<dbReference type="FunFam" id="1.10.132.20:FF:000001">
    <property type="entry name" value="Ribosome-recycling factor"/>
    <property type="match status" value="1"/>
</dbReference>
<dbReference type="FunFam" id="3.30.1360.40:FF:000001">
    <property type="entry name" value="Ribosome-recycling factor"/>
    <property type="match status" value="1"/>
</dbReference>
<dbReference type="Gene3D" id="3.30.1360.40">
    <property type="match status" value="1"/>
</dbReference>
<dbReference type="Gene3D" id="1.10.132.20">
    <property type="entry name" value="Ribosome-recycling factor"/>
    <property type="match status" value="1"/>
</dbReference>
<dbReference type="HAMAP" id="MF_00040">
    <property type="entry name" value="RRF"/>
    <property type="match status" value="1"/>
</dbReference>
<dbReference type="InterPro" id="IPR002661">
    <property type="entry name" value="Ribosome_recyc_fac"/>
</dbReference>
<dbReference type="InterPro" id="IPR023584">
    <property type="entry name" value="Ribosome_recyc_fac_dom"/>
</dbReference>
<dbReference type="InterPro" id="IPR036191">
    <property type="entry name" value="RRF_sf"/>
</dbReference>
<dbReference type="NCBIfam" id="TIGR00496">
    <property type="entry name" value="frr"/>
    <property type="match status" value="1"/>
</dbReference>
<dbReference type="PANTHER" id="PTHR20982:SF3">
    <property type="entry name" value="MITOCHONDRIAL RIBOSOME RECYCLING FACTOR PSEUDO 1"/>
    <property type="match status" value="1"/>
</dbReference>
<dbReference type="PANTHER" id="PTHR20982">
    <property type="entry name" value="RIBOSOME RECYCLING FACTOR"/>
    <property type="match status" value="1"/>
</dbReference>
<dbReference type="Pfam" id="PF01765">
    <property type="entry name" value="RRF"/>
    <property type="match status" value="1"/>
</dbReference>
<dbReference type="SUPFAM" id="SSF55194">
    <property type="entry name" value="Ribosome recycling factor, RRF"/>
    <property type="match status" value="1"/>
</dbReference>
<comment type="function">
    <text evidence="1">Responsible for the release of ribosomes from messenger RNA at the termination of protein biosynthesis. May increase the efficiency of translation by recycling ribosomes from one round of translation to another.</text>
</comment>
<comment type="subcellular location">
    <subcellularLocation>
        <location evidence="1">Cytoplasm</location>
    </subcellularLocation>
</comment>
<comment type="similarity">
    <text evidence="1">Belongs to the RRF family.</text>
</comment>
<evidence type="ECO:0000255" key="1">
    <source>
        <dbReference type="HAMAP-Rule" id="MF_00040"/>
    </source>
</evidence>
<proteinExistence type="inferred from homology"/>
<accession>Q8EGH2</accession>
<protein>
    <recommendedName>
        <fullName evidence="1">Ribosome-recycling factor</fullName>
        <shortName evidence="1">RRF</shortName>
    </recommendedName>
    <alternativeName>
        <fullName evidence="1">Ribosome-releasing factor</fullName>
    </alternativeName>
</protein>
<gene>
    <name evidence="1" type="primary">frr</name>
    <name type="ordered locus">SO_1632</name>
</gene>
<reference key="1">
    <citation type="journal article" date="2002" name="Nat. Biotechnol.">
        <title>Genome sequence of the dissimilatory metal ion-reducing bacterium Shewanella oneidensis.</title>
        <authorList>
            <person name="Heidelberg J.F."/>
            <person name="Paulsen I.T."/>
            <person name="Nelson K.E."/>
            <person name="Gaidos E.J."/>
            <person name="Nelson W.C."/>
            <person name="Read T.D."/>
            <person name="Eisen J.A."/>
            <person name="Seshadri R."/>
            <person name="Ward N.L."/>
            <person name="Methe B.A."/>
            <person name="Clayton R.A."/>
            <person name="Meyer T."/>
            <person name="Tsapin A."/>
            <person name="Scott J."/>
            <person name="Beanan M.J."/>
            <person name="Brinkac L.M."/>
            <person name="Daugherty S.C."/>
            <person name="DeBoy R.T."/>
            <person name="Dodson R.J."/>
            <person name="Durkin A.S."/>
            <person name="Haft D.H."/>
            <person name="Kolonay J.F."/>
            <person name="Madupu R."/>
            <person name="Peterson J.D."/>
            <person name="Umayam L.A."/>
            <person name="White O."/>
            <person name="Wolf A.M."/>
            <person name="Vamathevan J.J."/>
            <person name="Weidman J.F."/>
            <person name="Impraim M."/>
            <person name="Lee K."/>
            <person name="Berry K.J."/>
            <person name="Lee C."/>
            <person name="Mueller J."/>
            <person name="Khouri H.M."/>
            <person name="Gill J."/>
            <person name="Utterback T.R."/>
            <person name="McDonald L.A."/>
            <person name="Feldblyum T.V."/>
            <person name="Smith H.O."/>
            <person name="Venter J.C."/>
            <person name="Nealson K.H."/>
            <person name="Fraser C.M."/>
        </authorList>
    </citation>
    <scope>NUCLEOTIDE SEQUENCE [LARGE SCALE GENOMIC DNA]</scope>
    <source>
        <strain>ATCC 700550 / JCM 31522 / CIP 106686 / LMG 19005 / NCIMB 14063 / MR-1</strain>
    </source>
</reference>
<sequence length="185" mass="20587">MIADIKKDAQERMGKCVDATKNQMAKVRTGRAHPSLLDSIQVSYYGTMTPLNQVANVGVEDARTLSVTVFDRSAIQAVEKAIMSSDLGLNPMSAGATLRIPLPALTEERRKDFIKVVRAEAEGGRVAIRNVRRDAISDVKKLEKAKECTEDDVRRFEDEVQKFTDAHIKKVDEILAAKEIELMEV</sequence>
<keyword id="KW-0963">Cytoplasm</keyword>
<keyword id="KW-0648">Protein biosynthesis</keyword>
<keyword id="KW-1185">Reference proteome</keyword>
<feature type="chain" id="PRO_0000167535" description="Ribosome-recycling factor">
    <location>
        <begin position="1"/>
        <end position="185"/>
    </location>
</feature>
<organism>
    <name type="scientific">Shewanella oneidensis (strain ATCC 700550 / JCM 31522 / CIP 106686 / LMG 19005 / NCIMB 14063 / MR-1)</name>
    <dbReference type="NCBI Taxonomy" id="211586"/>
    <lineage>
        <taxon>Bacteria</taxon>
        <taxon>Pseudomonadati</taxon>
        <taxon>Pseudomonadota</taxon>
        <taxon>Gammaproteobacteria</taxon>
        <taxon>Alteromonadales</taxon>
        <taxon>Shewanellaceae</taxon>
        <taxon>Shewanella</taxon>
    </lineage>
</organism>